<dbReference type="EMBL" id="AE016828">
    <property type="protein sequence ID" value="AAO89793.1"/>
    <property type="molecule type" value="Genomic_DNA"/>
</dbReference>
<dbReference type="RefSeq" id="NP_819279.1">
    <property type="nucleotide sequence ID" value="NC_002971.4"/>
</dbReference>
<dbReference type="RefSeq" id="WP_010957451.1">
    <property type="nucleotide sequence ID" value="NC_002971.4"/>
</dbReference>
<dbReference type="SMR" id="Q83ES7"/>
<dbReference type="STRING" id="227377.CBU_0235"/>
<dbReference type="DNASU" id="1208116"/>
<dbReference type="EnsemblBacteria" id="AAO89793">
    <property type="protein sequence ID" value="AAO89793"/>
    <property type="gene ID" value="CBU_0235"/>
</dbReference>
<dbReference type="GeneID" id="1208116"/>
<dbReference type="KEGG" id="cbu:CBU_0235"/>
<dbReference type="PATRIC" id="fig|227377.7.peg.230"/>
<dbReference type="eggNOG" id="COG0480">
    <property type="taxonomic scope" value="Bacteria"/>
</dbReference>
<dbReference type="HOGENOM" id="CLU_002794_4_1_6"/>
<dbReference type="OrthoDB" id="9804431at2"/>
<dbReference type="Proteomes" id="UP000002671">
    <property type="component" value="Chromosome"/>
</dbReference>
<dbReference type="GO" id="GO:0005829">
    <property type="term" value="C:cytosol"/>
    <property type="evidence" value="ECO:0000318"/>
    <property type="project" value="GO_Central"/>
</dbReference>
<dbReference type="GO" id="GO:0005525">
    <property type="term" value="F:GTP binding"/>
    <property type="evidence" value="ECO:0007669"/>
    <property type="project" value="UniProtKB-UniRule"/>
</dbReference>
<dbReference type="GO" id="GO:0003924">
    <property type="term" value="F:GTPase activity"/>
    <property type="evidence" value="ECO:0007669"/>
    <property type="project" value="InterPro"/>
</dbReference>
<dbReference type="GO" id="GO:0097216">
    <property type="term" value="F:guanosine tetraphosphate binding"/>
    <property type="evidence" value="ECO:0007669"/>
    <property type="project" value="UniProtKB-ARBA"/>
</dbReference>
<dbReference type="GO" id="GO:0003746">
    <property type="term" value="F:translation elongation factor activity"/>
    <property type="evidence" value="ECO:0007669"/>
    <property type="project" value="UniProtKB-UniRule"/>
</dbReference>
<dbReference type="GO" id="GO:0032790">
    <property type="term" value="P:ribosome disassembly"/>
    <property type="evidence" value="ECO:0000318"/>
    <property type="project" value="GO_Central"/>
</dbReference>
<dbReference type="CDD" id="cd01886">
    <property type="entry name" value="EF-G"/>
    <property type="match status" value="1"/>
</dbReference>
<dbReference type="CDD" id="cd16262">
    <property type="entry name" value="EFG_III"/>
    <property type="match status" value="1"/>
</dbReference>
<dbReference type="CDD" id="cd01434">
    <property type="entry name" value="EFG_mtEFG1_IV"/>
    <property type="match status" value="1"/>
</dbReference>
<dbReference type="CDD" id="cd03713">
    <property type="entry name" value="EFG_mtEFG_C"/>
    <property type="match status" value="1"/>
</dbReference>
<dbReference type="CDD" id="cd04088">
    <property type="entry name" value="EFG_mtEFG_II"/>
    <property type="match status" value="1"/>
</dbReference>
<dbReference type="FunFam" id="2.40.30.10:FF:000006">
    <property type="entry name" value="Elongation factor G"/>
    <property type="match status" value="1"/>
</dbReference>
<dbReference type="FunFam" id="3.30.230.10:FF:000003">
    <property type="entry name" value="Elongation factor G"/>
    <property type="match status" value="1"/>
</dbReference>
<dbReference type="FunFam" id="3.30.70.240:FF:000001">
    <property type="entry name" value="Elongation factor G"/>
    <property type="match status" value="1"/>
</dbReference>
<dbReference type="FunFam" id="3.30.70.870:FF:000001">
    <property type="entry name" value="Elongation factor G"/>
    <property type="match status" value="1"/>
</dbReference>
<dbReference type="FunFam" id="3.40.50.300:FF:000029">
    <property type="entry name" value="Elongation factor G"/>
    <property type="match status" value="1"/>
</dbReference>
<dbReference type="Gene3D" id="3.30.230.10">
    <property type="match status" value="1"/>
</dbReference>
<dbReference type="Gene3D" id="3.30.70.240">
    <property type="match status" value="1"/>
</dbReference>
<dbReference type="Gene3D" id="3.30.70.870">
    <property type="entry name" value="Elongation Factor G (Translational Gtpase), domain 3"/>
    <property type="match status" value="1"/>
</dbReference>
<dbReference type="Gene3D" id="3.40.50.300">
    <property type="entry name" value="P-loop containing nucleotide triphosphate hydrolases"/>
    <property type="match status" value="1"/>
</dbReference>
<dbReference type="Gene3D" id="2.40.30.10">
    <property type="entry name" value="Translation factors"/>
    <property type="match status" value="1"/>
</dbReference>
<dbReference type="HAMAP" id="MF_00054_B">
    <property type="entry name" value="EF_G_EF_2_B"/>
    <property type="match status" value="1"/>
</dbReference>
<dbReference type="InterPro" id="IPR041095">
    <property type="entry name" value="EFG_II"/>
</dbReference>
<dbReference type="InterPro" id="IPR009022">
    <property type="entry name" value="EFG_III"/>
</dbReference>
<dbReference type="InterPro" id="IPR035647">
    <property type="entry name" value="EFG_III/V"/>
</dbReference>
<dbReference type="InterPro" id="IPR047872">
    <property type="entry name" value="EFG_IV"/>
</dbReference>
<dbReference type="InterPro" id="IPR035649">
    <property type="entry name" value="EFG_V"/>
</dbReference>
<dbReference type="InterPro" id="IPR000640">
    <property type="entry name" value="EFG_V-like"/>
</dbReference>
<dbReference type="InterPro" id="IPR004161">
    <property type="entry name" value="EFTu-like_2"/>
</dbReference>
<dbReference type="InterPro" id="IPR031157">
    <property type="entry name" value="G_TR_CS"/>
</dbReference>
<dbReference type="InterPro" id="IPR027417">
    <property type="entry name" value="P-loop_NTPase"/>
</dbReference>
<dbReference type="InterPro" id="IPR020568">
    <property type="entry name" value="Ribosomal_Su5_D2-typ_SF"/>
</dbReference>
<dbReference type="InterPro" id="IPR014721">
    <property type="entry name" value="Ribsml_uS5_D2-typ_fold_subgr"/>
</dbReference>
<dbReference type="InterPro" id="IPR005225">
    <property type="entry name" value="Small_GTP-bd"/>
</dbReference>
<dbReference type="InterPro" id="IPR000795">
    <property type="entry name" value="T_Tr_GTP-bd_dom"/>
</dbReference>
<dbReference type="InterPro" id="IPR009000">
    <property type="entry name" value="Transl_B-barrel_sf"/>
</dbReference>
<dbReference type="InterPro" id="IPR004540">
    <property type="entry name" value="Transl_elong_EFG/EF2"/>
</dbReference>
<dbReference type="InterPro" id="IPR005517">
    <property type="entry name" value="Transl_elong_EFG/EF2_IV"/>
</dbReference>
<dbReference type="NCBIfam" id="TIGR00484">
    <property type="entry name" value="EF-G"/>
    <property type="match status" value="1"/>
</dbReference>
<dbReference type="NCBIfam" id="NF009379">
    <property type="entry name" value="PRK12740.1-3"/>
    <property type="match status" value="1"/>
</dbReference>
<dbReference type="NCBIfam" id="NF009381">
    <property type="entry name" value="PRK12740.1-5"/>
    <property type="match status" value="1"/>
</dbReference>
<dbReference type="NCBIfam" id="TIGR00231">
    <property type="entry name" value="small_GTP"/>
    <property type="match status" value="1"/>
</dbReference>
<dbReference type="PANTHER" id="PTHR43261:SF1">
    <property type="entry name" value="RIBOSOME-RELEASING FACTOR 2, MITOCHONDRIAL"/>
    <property type="match status" value="1"/>
</dbReference>
<dbReference type="PANTHER" id="PTHR43261">
    <property type="entry name" value="TRANSLATION ELONGATION FACTOR G-RELATED"/>
    <property type="match status" value="1"/>
</dbReference>
<dbReference type="Pfam" id="PF00679">
    <property type="entry name" value="EFG_C"/>
    <property type="match status" value="1"/>
</dbReference>
<dbReference type="Pfam" id="PF14492">
    <property type="entry name" value="EFG_III"/>
    <property type="match status" value="1"/>
</dbReference>
<dbReference type="Pfam" id="PF03764">
    <property type="entry name" value="EFG_IV"/>
    <property type="match status" value="1"/>
</dbReference>
<dbReference type="Pfam" id="PF00009">
    <property type="entry name" value="GTP_EFTU"/>
    <property type="match status" value="1"/>
</dbReference>
<dbReference type="Pfam" id="PF03144">
    <property type="entry name" value="GTP_EFTU_D2"/>
    <property type="match status" value="1"/>
</dbReference>
<dbReference type="PRINTS" id="PR00315">
    <property type="entry name" value="ELONGATNFCT"/>
</dbReference>
<dbReference type="SMART" id="SM00838">
    <property type="entry name" value="EFG_C"/>
    <property type="match status" value="1"/>
</dbReference>
<dbReference type="SMART" id="SM00889">
    <property type="entry name" value="EFG_IV"/>
    <property type="match status" value="1"/>
</dbReference>
<dbReference type="SUPFAM" id="SSF54980">
    <property type="entry name" value="EF-G C-terminal domain-like"/>
    <property type="match status" value="2"/>
</dbReference>
<dbReference type="SUPFAM" id="SSF52540">
    <property type="entry name" value="P-loop containing nucleoside triphosphate hydrolases"/>
    <property type="match status" value="1"/>
</dbReference>
<dbReference type="SUPFAM" id="SSF54211">
    <property type="entry name" value="Ribosomal protein S5 domain 2-like"/>
    <property type="match status" value="1"/>
</dbReference>
<dbReference type="SUPFAM" id="SSF50447">
    <property type="entry name" value="Translation proteins"/>
    <property type="match status" value="1"/>
</dbReference>
<dbReference type="PROSITE" id="PS00301">
    <property type="entry name" value="G_TR_1"/>
    <property type="match status" value="1"/>
</dbReference>
<dbReference type="PROSITE" id="PS51722">
    <property type="entry name" value="G_TR_2"/>
    <property type="match status" value="1"/>
</dbReference>
<comment type="function">
    <text evidence="1">Catalyzes the GTP-dependent ribosomal translocation step during translation elongation. During this step, the ribosome changes from the pre-translocational (PRE) to the post-translocational (POST) state as the newly formed A-site-bound peptidyl-tRNA and P-site-bound deacylated tRNA move to the P and E sites, respectively. Catalyzes the coordinated movement of the two tRNA molecules, the mRNA and conformational changes in the ribosome.</text>
</comment>
<comment type="subcellular location">
    <subcellularLocation>
        <location evidence="1">Cytoplasm</location>
    </subcellularLocation>
</comment>
<comment type="similarity">
    <text evidence="1">Belongs to the TRAFAC class translation factor GTPase superfamily. Classic translation factor GTPase family. EF-G/EF-2 subfamily.</text>
</comment>
<protein>
    <recommendedName>
        <fullName evidence="1">Elongation factor G</fullName>
        <shortName evidence="1">EF-G</shortName>
    </recommendedName>
</protein>
<name>EFG_COXBU</name>
<reference key="1">
    <citation type="journal article" date="2003" name="Proc. Natl. Acad. Sci. U.S.A.">
        <title>Complete genome sequence of the Q-fever pathogen, Coxiella burnetii.</title>
        <authorList>
            <person name="Seshadri R."/>
            <person name="Paulsen I.T."/>
            <person name="Eisen J.A."/>
            <person name="Read T.D."/>
            <person name="Nelson K.E."/>
            <person name="Nelson W.C."/>
            <person name="Ward N.L."/>
            <person name="Tettelin H."/>
            <person name="Davidsen T.M."/>
            <person name="Beanan M.J."/>
            <person name="DeBoy R.T."/>
            <person name="Daugherty S.C."/>
            <person name="Brinkac L.M."/>
            <person name="Madupu R."/>
            <person name="Dodson R.J."/>
            <person name="Khouri H.M."/>
            <person name="Lee K.H."/>
            <person name="Carty H.A."/>
            <person name="Scanlan D."/>
            <person name="Heinzen R.A."/>
            <person name="Thompson H.A."/>
            <person name="Samuel J.E."/>
            <person name="Fraser C.M."/>
            <person name="Heidelberg J.F."/>
        </authorList>
    </citation>
    <scope>NUCLEOTIDE SEQUENCE [LARGE SCALE GENOMIC DNA]</scope>
    <source>
        <strain>RSA 493 / Nine Mile phase I</strain>
    </source>
</reference>
<keyword id="KW-0963">Cytoplasm</keyword>
<keyword id="KW-0251">Elongation factor</keyword>
<keyword id="KW-0342">GTP-binding</keyword>
<keyword id="KW-0547">Nucleotide-binding</keyword>
<keyword id="KW-0648">Protein biosynthesis</keyword>
<keyword id="KW-1185">Reference proteome</keyword>
<sequence>MATAREIPLNRTRNIGIMAHIDAGKTTTTERVLYYTGVSHKMGEVHEGSAVMDWMEQEQERGITITSAATTCYWLGMDQQYPKHRINIIDTPGHVDFTIEVERSLRVLDGAVAVFCSVGGVEPQSETVWRQANRYHVPRLGFVNKMDRAGANFLRVVNQVKDRLNANPIPIQLPIGAEEDFKGVIDLIREKAIYWNEADRGRTYELADIPEDMKAEVQKWREKMIEAAAESSEELMDKYLEAGDLSPEQIRQGLRQRTLANEIVPILCGSAFKNKGVQALLDAVIDYLPSPTDVPAIRGEEDDGSEGSRSASDDEPFAALAFKIASDPFVGTLTFFRVYSGILKSGDSVYNPIKGKKERIGRLLQMHSNSREEIKEVRAGDIAAAVGLKTVTTGDTICNQQNIITLEKMDFPEPVISVAIEPKTKADQEKMGVALGKLAQEDPSFRVHTDEESAQTIIEGMGELHLEIIVDRMRREFNVEANVGKPRVAYRETIRRSVEQQGKYIRQTGGRGQYGDVWLRIEPREPGAGFEFENAIVGGVVPREYIPAVEKGVREQMENGIRAGYPVVDVKVTIFEGSYHDVDSSEMAFKIAGSMAFKEGASKADPVLLEPIMKVEVVTPEEYMGDVVGDLNRRRGMIQGMDESPAGKIVDVEVPLAEMFGYATDLRSLSQGRATYTMEFLKYAEAPSNIAEAIIKQQS</sequence>
<organism>
    <name type="scientific">Coxiella burnetii (strain RSA 493 / Nine Mile phase I)</name>
    <dbReference type="NCBI Taxonomy" id="227377"/>
    <lineage>
        <taxon>Bacteria</taxon>
        <taxon>Pseudomonadati</taxon>
        <taxon>Pseudomonadota</taxon>
        <taxon>Gammaproteobacteria</taxon>
        <taxon>Legionellales</taxon>
        <taxon>Coxiellaceae</taxon>
        <taxon>Coxiella</taxon>
    </lineage>
</organism>
<evidence type="ECO:0000255" key="1">
    <source>
        <dbReference type="HAMAP-Rule" id="MF_00054"/>
    </source>
</evidence>
<evidence type="ECO:0000256" key="2">
    <source>
        <dbReference type="SAM" id="MobiDB-lite"/>
    </source>
</evidence>
<gene>
    <name evidence="1" type="primary">fusA</name>
    <name type="ordered locus">CBU_0235</name>
</gene>
<feature type="chain" id="PRO_0000091114" description="Elongation factor G">
    <location>
        <begin position="1"/>
        <end position="699"/>
    </location>
</feature>
<feature type="domain" description="tr-type G">
    <location>
        <begin position="10"/>
        <end position="292"/>
    </location>
</feature>
<feature type="region of interest" description="Disordered" evidence="2">
    <location>
        <begin position="292"/>
        <end position="312"/>
    </location>
</feature>
<feature type="binding site" evidence="1">
    <location>
        <begin position="19"/>
        <end position="26"/>
    </location>
    <ligand>
        <name>GTP</name>
        <dbReference type="ChEBI" id="CHEBI:37565"/>
    </ligand>
</feature>
<feature type="binding site" evidence="1">
    <location>
        <begin position="90"/>
        <end position="94"/>
    </location>
    <ligand>
        <name>GTP</name>
        <dbReference type="ChEBI" id="CHEBI:37565"/>
    </ligand>
</feature>
<feature type="binding site" evidence="1">
    <location>
        <begin position="144"/>
        <end position="147"/>
    </location>
    <ligand>
        <name>GTP</name>
        <dbReference type="ChEBI" id="CHEBI:37565"/>
    </ligand>
</feature>
<accession>Q83ES7</accession>
<proteinExistence type="inferred from homology"/>